<feature type="chain" id="PRO_0000105890" description="UPF0344 protein LMOf2365_2298">
    <location>
        <begin position="1"/>
        <end position="120"/>
    </location>
</feature>
<feature type="transmembrane region" description="Helical" evidence="1">
    <location>
        <begin position="3"/>
        <end position="23"/>
    </location>
</feature>
<feature type="transmembrane region" description="Helical" evidence="1">
    <location>
        <begin position="33"/>
        <end position="53"/>
    </location>
</feature>
<feature type="transmembrane region" description="Helical" evidence="1">
    <location>
        <begin position="62"/>
        <end position="82"/>
    </location>
</feature>
<feature type="transmembrane region" description="Helical" evidence="1">
    <location>
        <begin position="92"/>
        <end position="112"/>
    </location>
</feature>
<proteinExistence type="inferred from homology"/>
<comment type="subcellular location">
    <subcellularLocation>
        <location evidence="1">Cell membrane</location>
        <topology evidence="1">Multi-pass membrane protein</topology>
    </subcellularLocation>
</comment>
<comment type="similarity">
    <text evidence="1">Belongs to the UPF0344 family.</text>
</comment>
<accession>Q71XA1</accession>
<evidence type="ECO:0000255" key="1">
    <source>
        <dbReference type="HAMAP-Rule" id="MF_01536"/>
    </source>
</evidence>
<sequence>MWGYIHLISWVAIVVLTVTALLIYSKSTKSFTMLQMINRVFYILVILSGIMMVKYSIEQSWILAIFKILMGIIVIGVVEMLLSYRKQQKPTGMFLMIFVIVVVITISLGFYLSGGYPLFN</sequence>
<keyword id="KW-1003">Cell membrane</keyword>
<keyword id="KW-0472">Membrane</keyword>
<keyword id="KW-0812">Transmembrane</keyword>
<keyword id="KW-1133">Transmembrane helix</keyword>
<dbReference type="EMBL" id="AE017262">
    <property type="protein sequence ID" value="AAT05064.1"/>
    <property type="molecule type" value="Genomic_DNA"/>
</dbReference>
<dbReference type="RefSeq" id="WP_003726823.1">
    <property type="nucleotide sequence ID" value="NC_002973.6"/>
</dbReference>
<dbReference type="KEGG" id="lmf:LMOf2365_2298"/>
<dbReference type="HOGENOM" id="CLU_146641_0_0_9"/>
<dbReference type="GO" id="GO:0005886">
    <property type="term" value="C:plasma membrane"/>
    <property type="evidence" value="ECO:0007669"/>
    <property type="project" value="UniProtKB-SubCell"/>
</dbReference>
<dbReference type="HAMAP" id="MF_01536">
    <property type="entry name" value="UPF0344"/>
    <property type="match status" value="1"/>
</dbReference>
<dbReference type="InterPro" id="IPR010899">
    <property type="entry name" value="UPF0344"/>
</dbReference>
<dbReference type="NCBIfam" id="NF010197">
    <property type="entry name" value="PRK13673.1-4"/>
    <property type="match status" value="1"/>
</dbReference>
<dbReference type="Pfam" id="PF07457">
    <property type="entry name" value="DUF1516"/>
    <property type="match status" value="1"/>
</dbReference>
<name>Y2298_LISMF</name>
<organism>
    <name type="scientific">Listeria monocytogenes serotype 4b (strain F2365)</name>
    <dbReference type="NCBI Taxonomy" id="265669"/>
    <lineage>
        <taxon>Bacteria</taxon>
        <taxon>Bacillati</taxon>
        <taxon>Bacillota</taxon>
        <taxon>Bacilli</taxon>
        <taxon>Bacillales</taxon>
        <taxon>Listeriaceae</taxon>
        <taxon>Listeria</taxon>
    </lineage>
</organism>
<protein>
    <recommendedName>
        <fullName evidence="1">UPF0344 protein LMOf2365_2298</fullName>
    </recommendedName>
</protein>
<reference key="1">
    <citation type="journal article" date="2004" name="Nucleic Acids Res.">
        <title>Whole genome comparisons of serotype 4b and 1/2a strains of the food-borne pathogen Listeria monocytogenes reveal new insights into the core genome components of this species.</title>
        <authorList>
            <person name="Nelson K.E."/>
            <person name="Fouts D.E."/>
            <person name="Mongodin E.F."/>
            <person name="Ravel J."/>
            <person name="DeBoy R.T."/>
            <person name="Kolonay J.F."/>
            <person name="Rasko D.A."/>
            <person name="Angiuoli S.V."/>
            <person name="Gill S.R."/>
            <person name="Paulsen I.T."/>
            <person name="Peterson J.D."/>
            <person name="White O."/>
            <person name="Nelson W.C."/>
            <person name="Nierman W.C."/>
            <person name="Beanan M.J."/>
            <person name="Brinkac L.M."/>
            <person name="Daugherty S.C."/>
            <person name="Dodson R.J."/>
            <person name="Durkin A.S."/>
            <person name="Madupu R."/>
            <person name="Haft D.H."/>
            <person name="Selengut J."/>
            <person name="Van Aken S.E."/>
            <person name="Khouri H.M."/>
            <person name="Fedorova N."/>
            <person name="Forberger H.A."/>
            <person name="Tran B."/>
            <person name="Kathariou S."/>
            <person name="Wonderling L.D."/>
            <person name="Uhlich G.A."/>
            <person name="Bayles D.O."/>
            <person name="Luchansky J.B."/>
            <person name="Fraser C.M."/>
        </authorList>
    </citation>
    <scope>NUCLEOTIDE SEQUENCE [LARGE SCALE GENOMIC DNA]</scope>
    <source>
        <strain>F2365</strain>
    </source>
</reference>
<gene>
    <name type="ordered locus">LMOf2365_2298</name>
</gene>